<evidence type="ECO:0000250" key="1">
    <source>
        <dbReference type="UniProtKB" id="Q9NVH2"/>
    </source>
</evidence>
<evidence type="ECO:0000256" key="2">
    <source>
        <dbReference type="SAM" id="MobiDB-lite"/>
    </source>
</evidence>
<evidence type="ECO:0000305" key="3"/>
<protein>
    <recommendedName>
        <fullName>Integrator complex subunit 7 homolog</fullName>
    </recommendedName>
</protein>
<proteinExistence type="inferred from homology"/>
<sequence>MSKYKNSSLLNDQGGVRQPSLSNGSSVLGISNQLPPNSLFHLFSTNNQQSTTTPTTVTIQPPSSSISTPSPTTNNTVSGGGGIQTAGSSTSSASSVVGGGGGTTTPTNSNIVVIESNKEDDKECGTILMEINKGIRSGNLGEQIESILFFSHLIKFHPSPLIVNSVITRLSDIFRTTSNTVKYRILKVFQECSSEIHKVSNIEEVLKRIHSVILSNDPIARSLSLRVLGSVPHLIADKLYIHHSIRTCMQSHDQVELEATIFIMDKLCEISPLFSDSIIEKIHTVIQNVETPPITKLKYTRLFRHMHHSHSIATQSKEMLVGLLDLYPSVGFVSVILDTLTNLSLKHILYIDDHIKFLKNYGFSDSRVVVKVIALKCLQKLAITSPHSQFPIIEIFNIIKETPSKSYREIKYNALLLLSILSQSQYTKILELNQANDNDLIDILYQYSLDYDFKLSELSIQTLVNIIVESTDNNNNNNNNNNNNNNNNNNNNNNNNNNNNNNKLIESILNQTVNNICVILKTQFTTSTNNNTNINENKSTLNKTSVFLKSIIRLIKKDPKPLKSITTTIISLLNEIPYSILKSLFHCLSMCIPMNKSVLNQNGWFKLILDYLNNLIIKENSVQLINNNFNNNNNNNNNSNNNNNNIINRNNNGISNGINKQDCKYSIPMSIFMCIFKTFDENNQKIQEITEQLLPLIQYILENPKPDQLWSCYNLAQLSQRHGFHKIAMVIYSTLIHKVESECNYLWLKGLLSIATLENEISIYSITTNKNNTNNNNNNNNSKILNQLSNYHTSIVSLKASSQQERSLQFQEDFILLHEKYLFNILNLKSFLLECNDDGNNNNNNNNNNNNNNNNNNNNNNNNNNEILLKRFLSKSLIFRQLEQKYQLLLNIQSKSINHTVPLDTKQILESFIFSCNLIVKLIDLIVINKNNNNNNNINANGINHQQEQRYQQHQQSQNQELINYFPLFKFCEFIQKKLNQQHSIPSSSSSSSSTTNPISFLDQVLNGLIKIPMVYPSSFYFKF</sequence>
<reference key="1">
    <citation type="journal article" date="2005" name="Nature">
        <title>The genome of the social amoeba Dictyostelium discoideum.</title>
        <authorList>
            <person name="Eichinger L."/>
            <person name="Pachebat J.A."/>
            <person name="Gloeckner G."/>
            <person name="Rajandream M.A."/>
            <person name="Sucgang R."/>
            <person name="Berriman M."/>
            <person name="Song J."/>
            <person name="Olsen R."/>
            <person name="Szafranski K."/>
            <person name="Xu Q."/>
            <person name="Tunggal B."/>
            <person name="Kummerfeld S."/>
            <person name="Madera M."/>
            <person name="Konfortov B.A."/>
            <person name="Rivero F."/>
            <person name="Bankier A.T."/>
            <person name="Lehmann R."/>
            <person name="Hamlin N."/>
            <person name="Davies R."/>
            <person name="Gaudet P."/>
            <person name="Fey P."/>
            <person name="Pilcher K."/>
            <person name="Chen G."/>
            <person name="Saunders D."/>
            <person name="Sodergren E.J."/>
            <person name="Davis P."/>
            <person name="Kerhornou A."/>
            <person name="Nie X."/>
            <person name="Hall N."/>
            <person name="Anjard C."/>
            <person name="Hemphill L."/>
            <person name="Bason N."/>
            <person name="Farbrother P."/>
            <person name="Desany B."/>
            <person name="Just E."/>
            <person name="Morio T."/>
            <person name="Rost R."/>
            <person name="Churcher C.M."/>
            <person name="Cooper J."/>
            <person name="Haydock S."/>
            <person name="van Driessche N."/>
            <person name="Cronin A."/>
            <person name="Goodhead I."/>
            <person name="Muzny D.M."/>
            <person name="Mourier T."/>
            <person name="Pain A."/>
            <person name="Lu M."/>
            <person name="Harper D."/>
            <person name="Lindsay R."/>
            <person name="Hauser H."/>
            <person name="James K.D."/>
            <person name="Quiles M."/>
            <person name="Madan Babu M."/>
            <person name="Saito T."/>
            <person name="Buchrieser C."/>
            <person name="Wardroper A."/>
            <person name="Felder M."/>
            <person name="Thangavelu M."/>
            <person name="Johnson D."/>
            <person name="Knights A."/>
            <person name="Loulseged H."/>
            <person name="Mungall K.L."/>
            <person name="Oliver K."/>
            <person name="Price C."/>
            <person name="Quail M.A."/>
            <person name="Urushihara H."/>
            <person name="Hernandez J."/>
            <person name="Rabbinowitsch E."/>
            <person name="Steffen D."/>
            <person name="Sanders M."/>
            <person name="Ma J."/>
            <person name="Kohara Y."/>
            <person name="Sharp S."/>
            <person name="Simmonds M.N."/>
            <person name="Spiegler S."/>
            <person name="Tivey A."/>
            <person name="Sugano S."/>
            <person name="White B."/>
            <person name="Walker D."/>
            <person name="Woodward J.R."/>
            <person name="Winckler T."/>
            <person name="Tanaka Y."/>
            <person name="Shaulsky G."/>
            <person name="Schleicher M."/>
            <person name="Weinstock G.M."/>
            <person name="Rosenthal A."/>
            <person name="Cox E.C."/>
            <person name="Chisholm R.L."/>
            <person name="Gibbs R.A."/>
            <person name="Loomis W.F."/>
            <person name="Platzer M."/>
            <person name="Kay R.R."/>
            <person name="Williams J.G."/>
            <person name="Dear P.H."/>
            <person name="Noegel A.A."/>
            <person name="Barrell B.G."/>
            <person name="Kuspa A."/>
        </authorList>
    </citation>
    <scope>NUCLEOTIDE SEQUENCE [LARGE SCALE GENOMIC DNA]</scope>
    <source>
        <strain>AX4</strain>
    </source>
</reference>
<accession>Q54PL2</accession>
<name>INT7_DICDI</name>
<feature type="chain" id="PRO_0000344379" description="Integrator complex subunit 7 homolog">
    <location>
        <begin position="1"/>
        <end position="1024"/>
    </location>
</feature>
<feature type="region of interest" description="Disordered" evidence="2">
    <location>
        <begin position="1"/>
        <end position="109"/>
    </location>
</feature>
<feature type="region of interest" description="Disordered" evidence="2">
    <location>
        <begin position="472"/>
        <end position="502"/>
    </location>
</feature>
<feature type="region of interest" description="Disordered" evidence="2">
    <location>
        <begin position="842"/>
        <end position="863"/>
    </location>
</feature>
<feature type="compositionally biased region" description="Polar residues" evidence="2">
    <location>
        <begin position="1"/>
        <end position="11"/>
    </location>
</feature>
<feature type="compositionally biased region" description="Polar residues" evidence="2">
    <location>
        <begin position="19"/>
        <end position="36"/>
    </location>
</feature>
<feature type="compositionally biased region" description="Low complexity" evidence="2">
    <location>
        <begin position="44"/>
        <end position="77"/>
    </location>
</feature>
<feature type="compositionally biased region" description="Low complexity" evidence="2">
    <location>
        <begin position="85"/>
        <end position="96"/>
    </location>
</feature>
<feature type="compositionally biased region" description="Low complexity" evidence="2">
    <location>
        <begin position="473"/>
        <end position="502"/>
    </location>
</feature>
<keyword id="KW-0158">Chromosome</keyword>
<keyword id="KW-0963">Cytoplasm</keyword>
<keyword id="KW-0539">Nucleus</keyword>
<keyword id="KW-1185">Reference proteome</keyword>
<dbReference type="EMBL" id="AAFI02000066">
    <property type="protein sequence ID" value="EAL65168.1"/>
    <property type="molecule type" value="Genomic_DNA"/>
</dbReference>
<dbReference type="RefSeq" id="XP_638520.1">
    <property type="nucleotide sequence ID" value="XM_633428.1"/>
</dbReference>
<dbReference type="SMR" id="Q54PL2"/>
<dbReference type="FunCoup" id="Q54PL2">
    <property type="interactions" value="173"/>
</dbReference>
<dbReference type="STRING" id="44689.Q54PL2"/>
<dbReference type="PaxDb" id="44689-DDB0234098"/>
<dbReference type="EnsemblProtists" id="EAL65168">
    <property type="protein sequence ID" value="EAL65168"/>
    <property type="gene ID" value="DDB_G0284483"/>
</dbReference>
<dbReference type="GeneID" id="8624613"/>
<dbReference type="KEGG" id="ddi:DDB_G0284483"/>
<dbReference type="dictyBase" id="DDB_G0284483">
    <property type="gene designation" value="ints7"/>
</dbReference>
<dbReference type="VEuPathDB" id="AmoebaDB:DDB_G0284483"/>
<dbReference type="eggNOG" id="KOG1988">
    <property type="taxonomic scope" value="Eukaryota"/>
</dbReference>
<dbReference type="HOGENOM" id="CLU_295513_0_0_1"/>
<dbReference type="InParanoid" id="Q54PL2"/>
<dbReference type="OMA" id="FRHMHHS"/>
<dbReference type="Reactome" id="R-DDI-6807505">
    <property type="pathway name" value="RNA polymerase II transcribes snRNA genes"/>
</dbReference>
<dbReference type="PRO" id="PR:Q54PL2"/>
<dbReference type="Proteomes" id="UP000002195">
    <property type="component" value="Chromosome 4"/>
</dbReference>
<dbReference type="GO" id="GO:0005694">
    <property type="term" value="C:chromosome"/>
    <property type="evidence" value="ECO:0007669"/>
    <property type="project" value="UniProtKB-SubCell"/>
</dbReference>
<dbReference type="GO" id="GO:0005737">
    <property type="term" value="C:cytoplasm"/>
    <property type="evidence" value="ECO:0000250"/>
    <property type="project" value="UniProtKB"/>
</dbReference>
<dbReference type="GO" id="GO:0160232">
    <property type="term" value="C:INTAC complex"/>
    <property type="evidence" value="ECO:0000250"/>
    <property type="project" value="UniProtKB"/>
</dbReference>
<dbReference type="GO" id="GO:0032039">
    <property type="term" value="C:integrator complex"/>
    <property type="evidence" value="ECO:0000250"/>
    <property type="project" value="UniProtKB"/>
</dbReference>
<dbReference type="GO" id="GO:0005634">
    <property type="term" value="C:nucleus"/>
    <property type="evidence" value="ECO:0000250"/>
    <property type="project" value="UniProtKB"/>
</dbReference>
<dbReference type="GO" id="GO:0160240">
    <property type="term" value="P:RNA polymerase II transcription initiation surveillance"/>
    <property type="evidence" value="ECO:0000250"/>
    <property type="project" value="UniProtKB"/>
</dbReference>
<dbReference type="GO" id="GO:0034472">
    <property type="term" value="P:snRNA 3'-end processing"/>
    <property type="evidence" value="ECO:0000318"/>
    <property type="project" value="GO_Central"/>
</dbReference>
<dbReference type="InterPro" id="IPR016024">
    <property type="entry name" value="ARM-type_fold"/>
</dbReference>
<dbReference type="InterPro" id="IPR033060">
    <property type="entry name" value="INTS7"/>
</dbReference>
<dbReference type="InterPro" id="IPR056517">
    <property type="entry name" value="INTS7_HB"/>
</dbReference>
<dbReference type="InterPro" id="IPR056516">
    <property type="entry name" value="INTS7_N"/>
</dbReference>
<dbReference type="PANTHER" id="PTHR13322">
    <property type="entry name" value="C1ORF73 PROTEIN"/>
    <property type="match status" value="1"/>
</dbReference>
<dbReference type="PANTHER" id="PTHR13322:SF2">
    <property type="entry name" value="INTEGRATOR COMPLEX SUBUNIT 7"/>
    <property type="match status" value="1"/>
</dbReference>
<dbReference type="Pfam" id="PF24437">
    <property type="entry name" value="INTS7_HB"/>
    <property type="match status" value="1"/>
</dbReference>
<dbReference type="Pfam" id="PF24436">
    <property type="entry name" value="INTS7_N"/>
    <property type="match status" value="1"/>
</dbReference>
<dbReference type="SUPFAM" id="SSF48371">
    <property type="entry name" value="ARM repeat"/>
    <property type="match status" value="1"/>
</dbReference>
<organism>
    <name type="scientific">Dictyostelium discoideum</name>
    <name type="common">Social amoeba</name>
    <dbReference type="NCBI Taxonomy" id="44689"/>
    <lineage>
        <taxon>Eukaryota</taxon>
        <taxon>Amoebozoa</taxon>
        <taxon>Evosea</taxon>
        <taxon>Eumycetozoa</taxon>
        <taxon>Dictyostelia</taxon>
        <taxon>Dictyosteliales</taxon>
        <taxon>Dictyosteliaceae</taxon>
        <taxon>Dictyostelium</taxon>
    </lineage>
</organism>
<gene>
    <name type="primary">ints7</name>
    <name type="ORF">DDB_G0284483</name>
</gene>
<comment type="function">
    <text evidence="1">Component of the integrator complex, a multiprotein complex that terminates RNA polymerase II (Pol II) transcription in the promoter-proximal region of genes. The integrator complex provides a quality checkpoint during transcription elongation by driving premature transcription termination of transcripts that are unfavorably configured for transcriptional elongation: the complex terminates transcription by (1) catalyzing dephosphorylation of the C-terminal domain (CTD) of Pol II subunit polr2a, (2) degrading the exiting nascent RNA transcript via endonuclease activity and (3) promoting the release of Pol II from bound DNA. The integrator complex is also involved in terminating the synthesis of non-coding Pol II transcripts, such as enhancer RNAs (eRNAs), small nuclear RNAs (snRNAs), telomerase RNAs and long non-coding RNAs (lncRNAs).</text>
</comment>
<comment type="subunit">
    <text evidence="1">Component of the Integrator complex. The core complex associates with protein phosphatase 2A subunits, to form the Integrator-PP2A (INTAC) complex.</text>
</comment>
<comment type="subcellular location">
    <subcellularLocation>
        <location evidence="1">Nucleus</location>
    </subcellularLocation>
    <subcellularLocation>
        <location evidence="1">Chromosome</location>
    </subcellularLocation>
    <subcellularLocation>
        <location evidence="1">Cytoplasm</location>
    </subcellularLocation>
    <text evidence="1">Localizes to sites of DNA damage in a H2AX-independent manner.</text>
</comment>
<comment type="similarity">
    <text evidence="3">Belongs to the Integrator subunit 7 family.</text>
</comment>